<keyword id="KW-0067">ATP-binding</keyword>
<keyword id="KW-0963">Cytoplasm</keyword>
<keyword id="KW-0227">DNA damage</keyword>
<keyword id="KW-0228">DNA excision</keyword>
<keyword id="KW-0234">DNA repair</keyword>
<keyword id="KW-0267">Excision nuclease</keyword>
<keyword id="KW-0347">Helicase</keyword>
<keyword id="KW-0378">Hydrolase</keyword>
<keyword id="KW-0547">Nucleotide-binding</keyword>
<keyword id="KW-0742">SOS response</keyword>
<reference key="1">
    <citation type="journal article" date="2007" name="Genome Res.">
        <title>Lateral gene transfer between obligate intracellular bacteria: evidence from the Rickettsia massiliae genome.</title>
        <authorList>
            <person name="Blanc G."/>
            <person name="Ogata H."/>
            <person name="Robert C."/>
            <person name="Audic S."/>
            <person name="Claverie J.-M."/>
            <person name="Raoult D."/>
        </authorList>
    </citation>
    <scope>NUCLEOTIDE SEQUENCE [LARGE SCALE GENOMIC DNA]</scope>
    <source>
        <strain>Mtu5</strain>
    </source>
</reference>
<name>UVRB_RICM5</name>
<comment type="function">
    <text evidence="1">The UvrABC repair system catalyzes the recognition and processing of DNA lesions. A damage recognition complex composed of 2 UvrA and 2 UvrB subunits scans DNA for abnormalities. Upon binding of the UvrA(2)B(2) complex to a putative damaged site, the DNA wraps around one UvrB monomer. DNA wrap is dependent on ATP binding by UvrB and probably causes local melting of the DNA helix, facilitating insertion of UvrB beta-hairpin between the DNA strands. Then UvrB probes one DNA strand for the presence of a lesion. If a lesion is found the UvrA subunits dissociate and the UvrB-DNA preincision complex is formed. This complex is subsequently bound by UvrC and the second UvrB is released. If no lesion is found, the DNA wraps around the other UvrB subunit that will check the other stand for damage.</text>
</comment>
<comment type="subunit">
    <text evidence="1">Forms a heterotetramer with UvrA during the search for lesions. Interacts with UvrC in an incision complex.</text>
</comment>
<comment type="subcellular location">
    <subcellularLocation>
        <location evidence="1">Cytoplasm</location>
    </subcellularLocation>
</comment>
<comment type="domain">
    <text evidence="1">The beta-hairpin motif is involved in DNA binding.</text>
</comment>
<comment type="similarity">
    <text evidence="1">Belongs to the UvrB family.</text>
</comment>
<evidence type="ECO:0000255" key="1">
    <source>
        <dbReference type="HAMAP-Rule" id="MF_00204"/>
    </source>
</evidence>
<organism>
    <name type="scientific">Rickettsia massiliae (strain Mtu5)</name>
    <dbReference type="NCBI Taxonomy" id="416276"/>
    <lineage>
        <taxon>Bacteria</taxon>
        <taxon>Pseudomonadati</taxon>
        <taxon>Pseudomonadota</taxon>
        <taxon>Alphaproteobacteria</taxon>
        <taxon>Rickettsiales</taxon>
        <taxon>Rickettsiaceae</taxon>
        <taxon>Rickettsieae</taxon>
        <taxon>Rickettsia</taxon>
        <taxon>spotted fever group</taxon>
    </lineage>
</organism>
<proteinExistence type="inferred from homology"/>
<feature type="chain" id="PRO_1000077916" description="UvrABC system protein B">
    <location>
        <begin position="1"/>
        <end position="661"/>
    </location>
</feature>
<feature type="domain" description="Helicase ATP-binding" evidence="1">
    <location>
        <begin position="25"/>
        <end position="182"/>
    </location>
</feature>
<feature type="domain" description="Helicase C-terminal" evidence="1">
    <location>
        <begin position="430"/>
        <end position="592"/>
    </location>
</feature>
<feature type="domain" description="UVR" evidence="1">
    <location>
        <begin position="621"/>
        <end position="656"/>
    </location>
</feature>
<feature type="short sequence motif" description="Beta-hairpin">
    <location>
        <begin position="91"/>
        <end position="114"/>
    </location>
</feature>
<feature type="binding site" evidence="1">
    <location>
        <begin position="38"/>
        <end position="45"/>
    </location>
    <ligand>
        <name>ATP</name>
        <dbReference type="ChEBI" id="CHEBI:30616"/>
    </ligand>
</feature>
<accession>A8F0V9</accession>
<dbReference type="EMBL" id="CP000683">
    <property type="protein sequence ID" value="ABV84545.1"/>
    <property type="molecule type" value="Genomic_DNA"/>
</dbReference>
<dbReference type="RefSeq" id="WP_012152522.1">
    <property type="nucleotide sequence ID" value="NC_009900.1"/>
</dbReference>
<dbReference type="SMR" id="A8F0V9"/>
<dbReference type="KEGG" id="rms:RMA_0273"/>
<dbReference type="HOGENOM" id="CLU_009621_2_1_5"/>
<dbReference type="Proteomes" id="UP000001311">
    <property type="component" value="Chromosome"/>
</dbReference>
<dbReference type="GO" id="GO:0005737">
    <property type="term" value="C:cytoplasm"/>
    <property type="evidence" value="ECO:0007669"/>
    <property type="project" value="UniProtKB-SubCell"/>
</dbReference>
<dbReference type="GO" id="GO:0009380">
    <property type="term" value="C:excinuclease repair complex"/>
    <property type="evidence" value="ECO:0007669"/>
    <property type="project" value="InterPro"/>
</dbReference>
<dbReference type="GO" id="GO:0005524">
    <property type="term" value="F:ATP binding"/>
    <property type="evidence" value="ECO:0007669"/>
    <property type="project" value="UniProtKB-UniRule"/>
</dbReference>
<dbReference type="GO" id="GO:0016887">
    <property type="term" value="F:ATP hydrolysis activity"/>
    <property type="evidence" value="ECO:0007669"/>
    <property type="project" value="InterPro"/>
</dbReference>
<dbReference type="GO" id="GO:0003677">
    <property type="term" value="F:DNA binding"/>
    <property type="evidence" value="ECO:0007669"/>
    <property type="project" value="UniProtKB-UniRule"/>
</dbReference>
<dbReference type="GO" id="GO:0009381">
    <property type="term" value="F:excinuclease ABC activity"/>
    <property type="evidence" value="ECO:0007669"/>
    <property type="project" value="UniProtKB-UniRule"/>
</dbReference>
<dbReference type="GO" id="GO:0004386">
    <property type="term" value="F:helicase activity"/>
    <property type="evidence" value="ECO:0007669"/>
    <property type="project" value="UniProtKB-KW"/>
</dbReference>
<dbReference type="GO" id="GO:0006289">
    <property type="term" value="P:nucleotide-excision repair"/>
    <property type="evidence" value="ECO:0007669"/>
    <property type="project" value="UniProtKB-UniRule"/>
</dbReference>
<dbReference type="GO" id="GO:0009432">
    <property type="term" value="P:SOS response"/>
    <property type="evidence" value="ECO:0007669"/>
    <property type="project" value="UniProtKB-UniRule"/>
</dbReference>
<dbReference type="CDD" id="cd17916">
    <property type="entry name" value="DEXHc_UvrB"/>
    <property type="match status" value="1"/>
</dbReference>
<dbReference type="CDD" id="cd18790">
    <property type="entry name" value="SF2_C_UvrB"/>
    <property type="match status" value="1"/>
</dbReference>
<dbReference type="Gene3D" id="3.40.50.300">
    <property type="entry name" value="P-loop containing nucleotide triphosphate hydrolases"/>
    <property type="match status" value="3"/>
</dbReference>
<dbReference type="Gene3D" id="4.10.860.10">
    <property type="entry name" value="UVR domain"/>
    <property type="match status" value="1"/>
</dbReference>
<dbReference type="HAMAP" id="MF_00204">
    <property type="entry name" value="UvrB"/>
    <property type="match status" value="1"/>
</dbReference>
<dbReference type="InterPro" id="IPR006935">
    <property type="entry name" value="Helicase/UvrB_N"/>
</dbReference>
<dbReference type="InterPro" id="IPR014001">
    <property type="entry name" value="Helicase_ATP-bd"/>
</dbReference>
<dbReference type="InterPro" id="IPR001650">
    <property type="entry name" value="Helicase_C-like"/>
</dbReference>
<dbReference type="InterPro" id="IPR027417">
    <property type="entry name" value="P-loop_NTPase"/>
</dbReference>
<dbReference type="InterPro" id="IPR001943">
    <property type="entry name" value="UVR_dom"/>
</dbReference>
<dbReference type="InterPro" id="IPR036876">
    <property type="entry name" value="UVR_dom_sf"/>
</dbReference>
<dbReference type="InterPro" id="IPR004807">
    <property type="entry name" value="UvrB"/>
</dbReference>
<dbReference type="InterPro" id="IPR041471">
    <property type="entry name" value="UvrB_inter"/>
</dbReference>
<dbReference type="InterPro" id="IPR024759">
    <property type="entry name" value="UvrB_YAD/RRR_dom"/>
</dbReference>
<dbReference type="NCBIfam" id="NF003673">
    <property type="entry name" value="PRK05298.1"/>
    <property type="match status" value="1"/>
</dbReference>
<dbReference type="NCBIfam" id="TIGR00631">
    <property type="entry name" value="uvrb"/>
    <property type="match status" value="1"/>
</dbReference>
<dbReference type="PANTHER" id="PTHR24029">
    <property type="entry name" value="UVRABC SYSTEM PROTEIN B"/>
    <property type="match status" value="1"/>
</dbReference>
<dbReference type="PANTHER" id="PTHR24029:SF0">
    <property type="entry name" value="UVRABC SYSTEM PROTEIN B"/>
    <property type="match status" value="1"/>
</dbReference>
<dbReference type="Pfam" id="PF00271">
    <property type="entry name" value="Helicase_C"/>
    <property type="match status" value="1"/>
</dbReference>
<dbReference type="Pfam" id="PF04851">
    <property type="entry name" value="ResIII"/>
    <property type="match status" value="1"/>
</dbReference>
<dbReference type="Pfam" id="PF02151">
    <property type="entry name" value="UVR"/>
    <property type="match status" value="1"/>
</dbReference>
<dbReference type="Pfam" id="PF12344">
    <property type="entry name" value="UvrB"/>
    <property type="match status" value="1"/>
</dbReference>
<dbReference type="Pfam" id="PF17757">
    <property type="entry name" value="UvrB_inter"/>
    <property type="match status" value="1"/>
</dbReference>
<dbReference type="SMART" id="SM00487">
    <property type="entry name" value="DEXDc"/>
    <property type="match status" value="1"/>
</dbReference>
<dbReference type="SMART" id="SM00490">
    <property type="entry name" value="HELICc"/>
    <property type="match status" value="1"/>
</dbReference>
<dbReference type="SUPFAM" id="SSF46600">
    <property type="entry name" value="C-terminal UvrC-binding domain of UvrB"/>
    <property type="match status" value="1"/>
</dbReference>
<dbReference type="SUPFAM" id="SSF52540">
    <property type="entry name" value="P-loop containing nucleoside triphosphate hydrolases"/>
    <property type="match status" value="2"/>
</dbReference>
<dbReference type="PROSITE" id="PS51192">
    <property type="entry name" value="HELICASE_ATP_BIND_1"/>
    <property type="match status" value="1"/>
</dbReference>
<dbReference type="PROSITE" id="PS51194">
    <property type="entry name" value="HELICASE_CTER"/>
    <property type="match status" value="1"/>
</dbReference>
<dbReference type="PROSITE" id="PS50151">
    <property type="entry name" value="UVR"/>
    <property type="match status" value="1"/>
</dbReference>
<protein>
    <recommendedName>
        <fullName evidence="1">UvrABC system protein B</fullName>
        <shortName evidence="1">Protein UvrB</shortName>
    </recommendedName>
    <alternativeName>
        <fullName evidence="1">Excinuclease ABC subunit B</fullName>
    </alternativeName>
</protein>
<gene>
    <name evidence="1" type="primary">uvrB</name>
    <name type="ordered locus">RMA_0273</name>
</gene>
<sequence length="661" mass="75351">MNNFSIISEYKPAGDQPKAIDEIIAGLSSKKRSQILLGITGSGKTFTMANIIERTNRPTLIMAHNKTLAAQIYSEMKSIFPKNAVEYFVSYYDYYQPEAYIARTDTFIEKDSSINEQIDLMRHAATRSLLERRDVIVVSSVSCIYGLGSPDLYYQMMVNLEPGQSYPRDQLLNDLINLQYERNDIGFERGCFRVKGDNIDIFPSHYSNKAWRLSFFGNELEYIHEFDPLTGAKLAKLDKAMVFGNSHFVMPQETVNNAISGIEEELQKRLEFLKSQDKPLETQRLNQRTQYDLEMLTETGNCKGVENYSRFFTGRNAGEPPPTLFEYLPEDALLFVDESHVSVPQIRAMYNGDRARKEVLVEHGFRLPSALDNRPLKFEEWEKFRPQTVFVSATPGPFELEETGGTVVELIIRPTGLLDPECIIKPATNQIEDLISEIQTTIAKGFRVLVTTLTKKMAEDLTAYLQELKYKTSYLHSHVHTLERIEILRDLRQGTIDILVGINLLREGLDIPECGLVAILDADKEGFLRSEVSLIQTIGRAARNSEGRVILYADKMTKSIDKAVSETLRRRQIQQEYNAKHGIIPKTINRTIHALAEFEKIDSKLDKKQAHTLFDNPAKLKTHIDKLKKEMLKAASNLEFEQAAKLRDQLKTLEEAALELS</sequence>